<sequence length="291" mass="31374">MTEFASRRTLVVRRFLRNRAAVASLAALLLLFVSAYALPPLLPYSYDDLDFNALLQPPGTKHWLGTNALGQDLLAQTLRGMQKSMLIGVCVAVISTGIAATVGAISGYFGGWRDRTLMWVVDLLLVVPSFILIAIVTPRTKNSANIMFLVLLLAGFGWMISSRMVRGMTMSLREREFIRAARYMGVSSRRIIVGHVVPNVASILIIDAALNVAAAILAETGLSFLGFGIQPPDVSLGTLIADGTASATAFPWVFLFPASILVLILVCANLTGDGLRDALDPASRSLRRGVR</sequence>
<comment type="function">
    <text evidence="1">Part of the ABC transporter complex OppABCD involved in the uptake of oligopeptides (By similarity). Responsible for the translocation of the substrate across the membrane (By similarity).</text>
</comment>
<comment type="subunit">
    <text evidence="1">The complex is composed of an ATP-binding protein (OppD), two transmembrane proteins (OppB and OppC) and a solute-binding protein (OppA).</text>
</comment>
<comment type="subcellular location">
    <subcellularLocation>
        <location evidence="1">Cell inner membrane</location>
        <topology evidence="1">Multi-pass membrane protein</topology>
    </subcellularLocation>
</comment>
<comment type="similarity">
    <text evidence="4">Belongs to the binding-protein-dependent transport system permease family. OppBC subfamily.</text>
</comment>
<keyword id="KW-0997">Cell inner membrane</keyword>
<keyword id="KW-1003">Cell membrane</keyword>
<keyword id="KW-0472">Membrane</keyword>
<keyword id="KW-0571">Peptide transport</keyword>
<keyword id="KW-0653">Protein transport</keyword>
<keyword id="KW-1185">Reference proteome</keyword>
<keyword id="KW-0812">Transmembrane</keyword>
<keyword id="KW-1133">Transmembrane helix</keyword>
<keyword id="KW-0813">Transport</keyword>
<dbReference type="EMBL" id="LT708304">
    <property type="protein sequence ID" value="SIT99916.1"/>
    <property type="molecule type" value="Genomic_DNA"/>
</dbReference>
<dbReference type="RefSeq" id="NP_854967.1">
    <property type="nucleotide sequence ID" value="NC_002945.3"/>
</dbReference>
<dbReference type="RefSeq" id="WP_003406607.1">
    <property type="nucleotide sequence ID" value="NC_002945.4"/>
</dbReference>
<dbReference type="SMR" id="P66965"/>
<dbReference type="KEGG" id="mbo:BQ2027_MB1313C"/>
<dbReference type="PATRIC" id="fig|233413.5.peg.1438"/>
<dbReference type="Proteomes" id="UP000001419">
    <property type="component" value="Chromosome"/>
</dbReference>
<dbReference type="GO" id="GO:0005886">
    <property type="term" value="C:plasma membrane"/>
    <property type="evidence" value="ECO:0007669"/>
    <property type="project" value="UniProtKB-SubCell"/>
</dbReference>
<dbReference type="GO" id="GO:0015833">
    <property type="term" value="P:peptide transport"/>
    <property type="evidence" value="ECO:0007669"/>
    <property type="project" value="UniProtKB-KW"/>
</dbReference>
<dbReference type="GO" id="GO:0015031">
    <property type="term" value="P:protein transport"/>
    <property type="evidence" value="ECO:0007669"/>
    <property type="project" value="UniProtKB-KW"/>
</dbReference>
<dbReference type="GO" id="GO:0055085">
    <property type="term" value="P:transmembrane transport"/>
    <property type="evidence" value="ECO:0007669"/>
    <property type="project" value="InterPro"/>
</dbReference>
<dbReference type="CDD" id="cd06261">
    <property type="entry name" value="TM_PBP2"/>
    <property type="match status" value="1"/>
</dbReference>
<dbReference type="FunFam" id="1.10.3720.10:FF:000102">
    <property type="entry name" value="Oligopeptide ABC transporter permease OppC"/>
    <property type="match status" value="1"/>
</dbReference>
<dbReference type="Gene3D" id="1.10.3720.10">
    <property type="entry name" value="MetI-like"/>
    <property type="match status" value="1"/>
</dbReference>
<dbReference type="InterPro" id="IPR050366">
    <property type="entry name" value="BP-dependent_transpt_permease"/>
</dbReference>
<dbReference type="InterPro" id="IPR000515">
    <property type="entry name" value="MetI-like"/>
</dbReference>
<dbReference type="InterPro" id="IPR035906">
    <property type="entry name" value="MetI-like_sf"/>
</dbReference>
<dbReference type="InterPro" id="IPR025966">
    <property type="entry name" value="OppC_N"/>
</dbReference>
<dbReference type="PANTHER" id="PTHR43386">
    <property type="entry name" value="OLIGOPEPTIDE TRANSPORT SYSTEM PERMEASE PROTEIN APPC"/>
    <property type="match status" value="1"/>
</dbReference>
<dbReference type="PANTHER" id="PTHR43386:SF2">
    <property type="entry name" value="OLIGOPEPTIDE TRANSPORT SYSTEM PERMEASE PROTEIN OPPC"/>
    <property type="match status" value="1"/>
</dbReference>
<dbReference type="Pfam" id="PF00528">
    <property type="entry name" value="BPD_transp_1"/>
    <property type="match status" value="1"/>
</dbReference>
<dbReference type="Pfam" id="PF12911">
    <property type="entry name" value="OppC_N"/>
    <property type="match status" value="1"/>
</dbReference>
<dbReference type="SUPFAM" id="SSF161098">
    <property type="entry name" value="MetI-like"/>
    <property type="match status" value="1"/>
</dbReference>
<dbReference type="PROSITE" id="PS50928">
    <property type="entry name" value="ABC_TM1"/>
    <property type="match status" value="1"/>
</dbReference>
<organism>
    <name type="scientific">Mycobacterium bovis (strain ATCC BAA-935 / AF2122/97)</name>
    <dbReference type="NCBI Taxonomy" id="233413"/>
    <lineage>
        <taxon>Bacteria</taxon>
        <taxon>Bacillati</taxon>
        <taxon>Actinomycetota</taxon>
        <taxon>Actinomycetes</taxon>
        <taxon>Mycobacteriales</taxon>
        <taxon>Mycobacteriaceae</taxon>
        <taxon>Mycobacterium</taxon>
        <taxon>Mycobacterium tuberculosis complex</taxon>
    </lineage>
</organism>
<accession>P66965</accession>
<accession>A0A1R3XXW7</accession>
<accession>Q10623</accession>
<accession>Q50698</accession>
<accession>X2BHW2</accession>
<reference key="1">
    <citation type="journal article" date="2003" name="Proc. Natl. Acad. Sci. U.S.A.">
        <title>The complete genome sequence of Mycobacterium bovis.</title>
        <authorList>
            <person name="Garnier T."/>
            <person name="Eiglmeier K."/>
            <person name="Camus J.-C."/>
            <person name="Medina N."/>
            <person name="Mansoor H."/>
            <person name="Pryor M."/>
            <person name="Duthoy S."/>
            <person name="Grondin S."/>
            <person name="Lacroix C."/>
            <person name="Monsempe C."/>
            <person name="Simon S."/>
            <person name="Harris B."/>
            <person name="Atkin R."/>
            <person name="Doggett J."/>
            <person name="Mayes R."/>
            <person name="Keating L."/>
            <person name="Wheeler P.R."/>
            <person name="Parkhill J."/>
            <person name="Barrell B.G."/>
            <person name="Cole S.T."/>
            <person name="Gordon S.V."/>
            <person name="Hewinson R.G."/>
        </authorList>
    </citation>
    <scope>NUCLEOTIDE SEQUENCE [LARGE SCALE GENOMIC DNA]</scope>
    <source>
        <strain>ATCC BAA-935 / AF2122/97</strain>
    </source>
</reference>
<reference key="2">
    <citation type="journal article" date="2017" name="Genome Announc.">
        <title>Updated reference genome sequence and annotation of Mycobacterium bovis AF2122/97.</title>
        <authorList>
            <person name="Malone K.M."/>
            <person name="Farrell D."/>
            <person name="Stuber T.P."/>
            <person name="Schubert O.T."/>
            <person name="Aebersold R."/>
            <person name="Robbe-Austerman S."/>
            <person name="Gordon S.V."/>
        </authorList>
    </citation>
    <scope>NUCLEOTIDE SEQUENCE [LARGE SCALE GENOMIC DNA]</scope>
    <scope>GENOME REANNOTATION</scope>
    <source>
        <strain>ATCC BAA-935 / AF2122/97</strain>
    </source>
</reference>
<gene>
    <name evidence="1" type="primary">oppC</name>
    <name type="ordered locus">BQ2027_MB1313C</name>
</gene>
<evidence type="ECO:0000250" key="1">
    <source>
        <dbReference type="UniProtKB" id="P9WFZ9"/>
    </source>
</evidence>
<evidence type="ECO:0000255" key="2"/>
<evidence type="ECO:0000255" key="3">
    <source>
        <dbReference type="PROSITE-ProRule" id="PRU00441"/>
    </source>
</evidence>
<evidence type="ECO:0000305" key="4"/>
<name>OPPC_MYCBO</name>
<proteinExistence type="inferred from homology"/>
<protein>
    <recommendedName>
        <fullName evidence="1">Oligopeptide transport system permease protein OppC</fullName>
    </recommendedName>
</protein>
<feature type="chain" id="PRO_0000060290" description="Oligopeptide transport system permease protein OppC">
    <location>
        <begin position="1"/>
        <end position="291"/>
    </location>
</feature>
<feature type="transmembrane region" description="Helical" evidence="2">
    <location>
        <begin position="22"/>
        <end position="42"/>
    </location>
</feature>
<feature type="transmembrane region" description="Helical" evidence="2">
    <location>
        <begin position="85"/>
        <end position="105"/>
    </location>
</feature>
<feature type="transmembrane region" description="Helical" evidence="2">
    <location>
        <begin position="116"/>
        <end position="136"/>
    </location>
</feature>
<feature type="transmembrane region" description="Helical" evidence="2">
    <location>
        <begin position="142"/>
        <end position="162"/>
    </location>
</feature>
<feature type="transmembrane region" description="Helical" evidence="2">
    <location>
        <begin position="209"/>
        <end position="229"/>
    </location>
</feature>
<feature type="transmembrane region" description="Helical" evidence="2">
    <location>
        <begin position="247"/>
        <end position="267"/>
    </location>
</feature>
<feature type="domain" description="ABC transmembrane type-1" evidence="3">
    <location>
        <begin position="81"/>
        <end position="272"/>
    </location>
</feature>